<comment type="function">
    <text evidence="1">Magnesium transporter that may mediate the influx of magnesium.</text>
</comment>
<comment type="subcellular location">
    <subcellularLocation>
        <location evidence="1">Membrane</location>
        <topology evidence="1">Multi-pass membrane protein</topology>
    </subcellularLocation>
</comment>
<comment type="similarity">
    <text evidence="3">Belongs to the CorA metal ion transporter (MIT) (TC 1.A.35.5) family.</text>
</comment>
<comment type="sequence caution" evidence="3">
    <conflict type="erroneous gene model prediction">
        <sequence resource="EMBL-CDS" id="BAF15141"/>
    </conflict>
</comment>
<organism>
    <name type="scientific">Oryza sativa subsp. japonica</name>
    <name type="common">Rice</name>
    <dbReference type="NCBI Taxonomy" id="39947"/>
    <lineage>
        <taxon>Eukaryota</taxon>
        <taxon>Viridiplantae</taxon>
        <taxon>Streptophyta</taxon>
        <taxon>Embryophyta</taxon>
        <taxon>Tracheophyta</taxon>
        <taxon>Spermatophyta</taxon>
        <taxon>Magnoliopsida</taxon>
        <taxon>Liliopsida</taxon>
        <taxon>Poales</taxon>
        <taxon>Poaceae</taxon>
        <taxon>BOP clade</taxon>
        <taxon>Oryzoideae</taxon>
        <taxon>Oryzeae</taxon>
        <taxon>Oryzinae</taxon>
        <taxon>Oryza</taxon>
        <taxon>Oryza sativa</taxon>
    </lineage>
</organism>
<name>MRS2C_ORYSJ</name>
<gene>
    <name type="primary">MRS2-C</name>
    <name type="ordered locus">Os04g0501100</name>
    <name type="ordered locus">LOC_Os04g42280</name>
    <name type="ORF">OSJNBa0029H02.22</name>
</gene>
<keyword id="KW-0406">Ion transport</keyword>
<keyword id="KW-0460">Magnesium</keyword>
<keyword id="KW-0472">Membrane</keyword>
<keyword id="KW-1185">Reference proteome</keyword>
<keyword id="KW-0812">Transmembrane</keyword>
<keyword id="KW-1133">Transmembrane helix</keyword>
<keyword id="KW-0813">Transport</keyword>
<proteinExistence type="inferred from homology"/>
<dbReference type="EMBL" id="AL606594">
    <property type="protein sequence ID" value="CAD41494.3"/>
    <property type="molecule type" value="Genomic_DNA"/>
</dbReference>
<dbReference type="EMBL" id="AP008210">
    <property type="protein sequence ID" value="BAF15141.2"/>
    <property type="status" value="ALT_SEQ"/>
    <property type="molecule type" value="Genomic_DNA"/>
</dbReference>
<dbReference type="EMBL" id="AP014960">
    <property type="status" value="NOT_ANNOTATED_CDS"/>
    <property type="molecule type" value="Genomic_DNA"/>
</dbReference>
<dbReference type="RefSeq" id="XP_015633967.1">
    <property type="nucleotide sequence ID" value="XM_015778481.1"/>
</dbReference>
<dbReference type="SMR" id="Q0JBZ6"/>
<dbReference type="FunCoup" id="Q0JBZ6">
    <property type="interactions" value="11"/>
</dbReference>
<dbReference type="PaxDb" id="39947-Q0JBZ6"/>
<dbReference type="KEGG" id="dosa:Os04g0501100"/>
<dbReference type="eggNOG" id="KOG2662">
    <property type="taxonomic scope" value="Eukaryota"/>
</dbReference>
<dbReference type="InParanoid" id="Q0JBZ6"/>
<dbReference type="OrthoDB" id="10251508at2759"/>
<dbReference type="Proteomes" id="UP000000763">
    <property type="component" value="Chromosome 4"/>
</dbReference>
<dbReference type="Proteomes" id="UP000059680">
    <property type="component" value="Chromosome 4"/>
</dbReference>
<dbReference type="GO" id="GO:0016020">
    <property type="term" value="C:membrane"/>
    <property type="evidence" value="ECO:0007669"/>
    <property type="project" value="UniProtKB-SubCell"/>
</dbReference>
<dbReference type="GO" id="GO:0015095">
    <property type="term" value="F:magnesium ion transmembrane transporter activity"/>
    <property type="evidence" value="ECO:0000318"/>
    <property type="project" value="GO_Central"/>
</dbReference>
<dbReference type="GO" id="GO:0015693">
    <property type="term" value="P:magnesium ion transport"/>
    <property type="evidence" value="ECO:0000318"/>
    <property type="project" value="GO_Central"/>
</dbReference>
<dbReference type="CDD" id="cd12823">
    <property type="entry name" value="Mrs2_Mfm1p-like"/>
    <property type="match status" value="1"/>
</dbReference>
<dbReference type="FunFam" id="1.20.58.340:FF:000009">
    <property type="entry name" value="Magnesium transporter MRS2-1"/>
    <property type="match status" value="1"/>
</dbReference>
<dbReference type="FunFam" id="2.40.128.330:FF:000001">
    <property type="entry name" value="Magnesium transporter MRS2-1"/>
    <property type="match status" value="1"/>
</dbReference>
<dbReference type="Gene3D" id="2.40.128.330">
    <property type="match status" value="1"/>
</dbReference>
<dbReference type="Gene3D" id="1.20.58.340">
    <property type="entry name" value="Magnesium transport protein CorA, transmembrane region"/>
    <property type="match status" value="2"/>
</dbReference>
<dbReference type="InterPro" id="IPR045863">
    <property type="entry name" value="CorA_TM1_TM2"/>
</dbReference>
<dbReference type="InterPro" id="IPR039204">
    <property type="entry name" value="MRS2-like"/>
</dbReference>
<dbReference type="PANTHER" id="PTHR13890:SF10">
    <property type="entry name" value="MAGNESIUM TRANSPORTER MRS2-C"/>
    <property type="match status" value="1"/>
</dbReference>
<dbReference type="PANTHER" id="PTHR13890">
    <property type="entry name" value="RNA SPLICING PROTEIN MRS2, MITOCHONDRIAL"/>
    <property type="match status" value="1"/>
</dbReference>
<dbReference type="Pfam" id="PF22099">
    <property type="entry name" value="MRS2-like"/>
    <property type="match status" value="1"/>
</dbReference>
<dbReference type="SUPFAM" id="SSF144083">
    <property type="entry name" value="Magnesium transport protein CorA, transmembrane region"/>
    <property type="match status" value="1"/>
</dbReference>
<evidence type="ECO:0000250" key="1"/>
<evidence type="ECO:0000255" key="2"/>
<evidence type="ECO:0000305" key="3"/>
<feature type="chain" id="PRO_0000394269" description="Magnesium transporter MRS2-C">
    <location>
        <begin position="1"/>
        <end position="428"/>
    </location>
</feature>
<feature type="transmembrane region" description="Helical" evidence="2">
    <location>
        <begin position="364"/>
        <end position="384"/>
    </location>
</feature>
<feature type="transmembrane region" description="Helical" evidence="2">
    <location>
        <begin position="400"/>
        <end position="420"/>
    </location>
</feature>
<feature type="short sequence motif" description="Required for magnesium transport activity">
    <location>
        <begin position="384"/>
        <end position="386"/>
    </location>
</feature>
<sequence>MDHDPKERLLLPPRAAAAAAANGPHRRAAPAAGGGGGGVAIDVHGLKRRGGGRRSWVRVDAATGASEAVEVAKPALMRRLDLPARDLRLLDPLFVYPSAILGRERAVVCNLERIRCIITADEALILRDPDVAGGGAETEEAVRRYVAELQRRLVDRADDLPFEFIALEVALEAACSFLDAQAVELEADAYPLLDELTTKISTLNLERVRRLKSKLVALTRRVQKVRDEIEQLMDDDGDMAEMYLTEKKRRMEASLLEEQAFQGMGNSGFGSSFSAPVSPVSSPPASRRLEKELSFARSRHDSFKSADSSQYSIEELEMLLEAYFVVIDYTLSKLTSLKEYIDDTEDFINIQLDNVRNQLIQFELLLTTATFVVAIFGVVSGVFGMNFEVDLFNVPHAFEWTLVITGVCGLVIFCCFIWYFKKRRFFPL</sequence>
<reference key="1">
    <citation type="journal article" date="2002" name="Nature">
        <title>Sequence and analysis of rice chromosome 4.</title>
        <authorList>
            <person name="Feng Q."/>
            <person name="Zhang Y."/>
            <person name="Hao P."/>
            <person name="Wang S."/>
            <person name="Fu G."/>
            <person name="Huang Y."/>
            <person name="Li Y."/>
            <person name="Zhu J."/>
            <person name="Liu Y."/>
            <person name="Hu X."/>
            <person name="Jia P."/>
            <person name="Zhang Y."/>
            <person name="Zhao Q."/>
            <person name="Ying K."/>
            <person name="Yu S."/>
            <person name="Tang Y."/>
            <person name="Weng Q."/>
            <person name="Zhang L."/>
            <person name="Lu Y."/>
            <person name="Mu J."/>
            <person name="Lu Y."/>
            <person name="Zhang L.S."/>
            <person name="Yu Z."/>
            <person name="Fan D."/>
            <person name="Liu X."/>
            <person name="Lu T."/>
            <person name="Li C."/>
            <person name="Wu Y."/>
            <person name="Sun T."/>
            <person name="Lei H."/>
            <person name="Li T."/>
            <person name="Hu H."/>
            <person name="Guan J."/>
            <person name="Wu M."/>
            <person name="Zhang R."/>
            <person name="Zhou B."/>
            <person name="Chen Z."/>
            <person name="Chen L."/>
            <person name="Jin Z."/>
            <person name="Wang R."/>
            <person name="Yin H."/>
            <person name="Cai Z."/>
            <person name="Ren S."/>
            <person name="Lv G."/>
            <person name="Gu W."/>
            <person name="Zhu G."/>
            <person name="Tu Y."/>
            <person name="Jia J."/>
            <person name="Zhang Y."/>
            <person name="Chen J."/>
            <person name="Kang H."/>
            <person name="Chen X."/>
            <person name="Shao C."/>
            <person name="Sun Y."/>
            <person name="Hu Q."/>
            <person name="Zhang X."/>
            <person name="Zhang W."/>
            <person name="Wang L."/>
            <person name="Ding C."/>
            <person name="Sheng H."/>
            <person name="Gu J."/>
            <person name="Chen S."/>
            <person name="Ni L."/>
            <person name="Zhu F."/>
            <person name="Chen W."/>
            <person name="Lan L."/>
            <person name="Lai Y."/>
            <person name="Cheng Z."/>
            <person name="Gu M."/>
            <person name="Jiang J."/>
            <person name="Li J."/>
            <person name="Hong G."/>
            <person name="Xue Y."/>
            <person name="Han B."/>
        </authorList>
    </citation>
    <scope>NUCLEOTIDE SEQUENCE [LARGE SCALE GENOMIC DNA]</scope>
    <source>
        <strain>cv. Nipponbare</strain>
    </source>
</reference>
<reference key="2">
    <citation type="journal article" date="2005" name="Nature">
        <title>The map-based sequence of the rice genome.</title>
        <authorList>
            <consortium name="International rice genome sequencing project (IRGSP)"/>
        </authorList>
    </citation>
    <scope>NUCLEOTIDE SEQUENCE [LARGE SCALE GENOMIC DNA]</scope>
    <source>
        <strain>cv. Nipponbare</strain>
    </source>
</reference>
<reference key="3">
    <citation type="journal article" date="2008" name="Nucleic Acids Res.">
        <title>The rice annotation project database (RAP-DB): 2008 update.</title>
        <authorList>
            <consortium name="The rice annotation project (RAP)"/>
        </authorList>
    </citation>
    <scope>GENOME REANNOTATION</scope>
    <source>
        <strain>cv. Nipponbare</strain>
    </source>
</reference>
<reference key="4">
    <citation type="journal article" date="2013" name="Rice">
        <title>Improvement of the Oryza sativa Nipponbare reference genome using next generation sequence and optical map data.</title>
        <authorList>
            <person name="Kawahara Y."/>
            <person name="de la Bastide M."/>
            <person name="Hamilton J.P."/>
            <person name="Kanamori H."/>
            <person name="McCombie W.R."/>
            <person name="Ouyang S."/>
            <person name="Schwartz D.C."/>
            <person name="Tanaka T."/>
            <person name="Wu J."/>
            <person name="Zhou S."/>
            <person name="Childs K.L."/>
            <person name="Davidson R.M."/>
            <person name="Lin H."/>
            <person name="Quesada-Ocampo L."/>
            <person name="Vaillancourt B."/>
            <person name="Sakai H."/>
            <person name="Lee S.S."/>
            <person name="Kim J."/>
            <person name="Numa H."/>
            <person name="Itoh T."/>
            <person name="Buell C.R."/>
            <person name="Matsumoto T."/>
        </authorList>
    </citation>
    <scope>GENOME REANNOTATION</scope>
    <source>
        <strain>cv. Nipponbare</strain>
    </source>
</reference>
<reference key="5">
    <citation type="journal article" date="2009" name="Plant Cell">
        <title>A root-expressed magnesium transporter of the MRS2/MGT gene family in Arabidopsis thaliana allows for growth in low-Mg2+ environments.</title>
        <authorList>
            <person name="Gebert M."/>
            <person name="Meschenmoser K."/>
            <person name="Svidova S."/>
            <person name="Weghuber J."/>
            <person name="Schweyen R."/>
            <person name="Eifler K."/>
            <person name="Lenz H."/>
            <person name="Weyand K."/>
            <person name="Knoop V."/>
        </authorList>
    </citation>
    <scope>GENE FAMILY</scope>
</reference>
<accession>Q0JBZ6</accession>
<accession>Q7XU85</accession>
<protein>
    <recommendedName>
        <fullName>Magnesium transporter MRS2-C</fullName>
    </recommendedName>
</protein>